<evidence type="ECO:0000255" key="1">
    <source>
        <dbReference type="HAMAP-Rule" id="MF_01225"/>
    </source>
</evidence>
<evidence type="ECO:0000255" key="2">
    <source>
        <dbReference type="PROSITE-ProRule" id="PRU01266"/>
    </source>
</evidence>
<name>MOAA_CLOBH</name>
<sequence>MLDKHGRKINYLRVSVTDRCNLRCVYCMPPEGIVKKEHDNIMRYEEIFKVVKSASLLGVNKIRFTGGEPLILKDIDKLIYNTSKINSIKDIAMTTNAILLEDMVEELKKAGLKRVNISLDSLKEDRFKSITRGGDINKVFKSIEKSLSIGMKPIKINTVIMKGINDDEIDDFMNLTKKYPISVRFIELMPIGEGRKLYKDGYISSEEIISKHSDLIPVETEKSSTALLYKFKESKENIGFISPMSCKFCSGCNRVRLTSEGTLKPCLHSEKEVNLKNYVGNNQALLSKINETIYNKPLEHHMIEEKESKSKKMMYQIGG</sequence>
<reference key="1">
    <citation type="journal article" date="2007" name="Genome Res.">
        <title>Genome sequence of a proteolytic (Group I) Clostridium botulinum strain Hall A and comparative analysis of the clostridial genomes.</title>
        <authorList>
            <person name="Sebaihia M."/>
            <person name="Peck M.W."/>
            <person name="Minton N.P."/>
            <person name="Thomson N.R."/>
            <person name="Holden M.T.G."/>
            <person name="Mitchell W.J."/>
            <person name="Carter A.T."/>
            <person name="Bentley S.D."/>
            <person name="Mason D.R."/>
            <person name="Crossman L."/>
            <person name="Paul C.J."/>
            <person name="Ivens A."/>
            <person name="Wells-Bennik M.H.J."/>
            <person name="Davis I.J."/>
            <person name="Cerdeno-Tarraga A.M."/>
            <person name="Churcher C."/>
            <person name="Quail M.A."/>
            <person name="Chillingworth T."/>
            <person name="Feltwell T."/>
            <person name="Fraser A."/>
            <person name="Goodhead I."/>
            <person name="Hance Z."/>
            <person name="Jagels K."/>
            <person name="Larke N."/>
            <person name="Maddison M."/>
            <person name="Moule S."/>
            <person name="Mungall K."/>
            <person name="Norbertczak H."/>
            <person name="Rabbinowitsch E."/>
            <person name="Sanders M."/>
            <person name="Simmonds M."/>
            <person name="White B."/>
            <person name="Whithead S."/>
            <person name="Parkhill J."/>
        </authorList>
    </citation>
    <scope>NUCLEOTIDE SEQUENCE [LARGE SCALE GENOMIC DNA]</scope>
    <source>
        <strain>Hall / ATCC 3502 / NCTC 13319 / Type A</strain>
    </source>
</reference>
<reference key="2">
    <citation type="journal article" date="2007" name="PLoS ONE">
        <title>Analysis of the neurotoxin complex genes in Clostridium botulinum A1-A4 and B1 strains: BoNT/A3, /Ba4 and /B1 clusters are located within plasmids.</title>
        <authorList>
            <person name="Smith T.J."/>
            <person name="Hill K.K."/>
            <person name="Foley B.T."/>
            <person name="Detter J.C."/>
            <person name="Munk A.C."/>
            <person name="Bruce D.C."/>
            <person name="Doggett N.A."/>
            <person name="Smith L.A."/>
            <person name="Marks J.D."/>
            <person name="Xie G."/>
            <person name="Brettin T.S."/>
        </authorList>
    </citation>
    <scope>NUCLEOTIDE SEQUENCE [LARGE SCALE GENOMIC DNA]</scope>
    <source>
        <strain>Hall / ATCC 3502 / NCTC 13319 / Type A</strain>
    </source>
</reference>
<comment type="function">
    <text evidence="1">Catalyzes the cyclization of GTP to (8S)-3',8-cyclo-7,8-dihydroguanosine 5'-triphosphate.</text>
</comment>
<comment type="catalytic activity">
    <reaction evidence="1">
        <text>GTP + AH2 + S-adenosyl-L-methionine = (8S)-3',8-cyclo-7,8-dihydroguanosine 5'-triphosphate + 5'-deoxyadenosine + L-methionine + A + H(+)</text>
        <dbReference type="Rhea" id="RHEA:49576"/>
        <dbReference type="ChEBI" id="CHEBI:13193"/>
        <dbReference type="ChEBI" id="CHEBI:15378"/>
        <dbReference type="ChEBI" id="CHEBI:17319"/>
        <dbReference type="ChEBI" id="CHEBI:17499"/>
        <dbReference type="ChEBI" id="CHEBI:37565"/>
        <dbReference type="ChEBI" id="CHEBI:57844"/>
        <dbReference type="ChEBI" id="CHEBI:59789"/>
        <dbReference type="ChEBI" id="CHEBI:131766"/>
        <dbReference type="EC" id="4.1.99.22"/>
    </reaction>
</comment>
<comment type="cofactor">
    <cofactor evidence="1">
        <name>[4Fe-4S] cluster</name>
        <dbReference type="ChEBI" id="CHEBI:49883"/>
    </cofactor>
    <text evidence="1">Binds 2 [4Fe-4S] clusters. Binds 1 [4Fe-4S] cluster coordinated with 3 cysteines and an exchangeable S-adenosyl-L-methionine and 1 [4Fe-4S] cluster coordinated with 3 cysteines and the GTP-derived substrate.</text>
</comment>
<comment type="pathway">
    <text evidence="1">Cofactor biosynthesis; molybdopterin biosynthesis.</text>
</comment>
<comment type="subunit">
    <text evidence="1">Monomer and homodimer.</text>
</comment>
<comment type="similarity">
    <text evidence="1">Belongs to the radical SAM superfamily. MoaA family.</text>
</comment>
<accession>A5I365</accession>
<accession>A7G4M5</accession>
<organism>
    <name type="scientific">Clostridium botulinum (strain Hall / ATCC 3502 / NCTC 13319 / Type A)</name>
    <dbReference type="NCBI Taxonomy" id="441771"/>
    <lineage>
        <taxon>Bacteria</taxon>
        <taxon>Bacillati</taxon>
        <taxon>Bacillota</taxon>
        <taxon>Clostridia</taxon>
        <taxon>Eubacteriales</taxon>
        <taxon>Clostridiaceae</taxon>
        <taxon>Clostridium</taxon>
    </lineage>
</organism>
<protein>
    <recommendedName>
        <fullName evidence="1">GTP 3',8-cyclase</fullName>
        <ecNumber evidence="1">4.1.99.22</ecNumber>
    </recommendedName>
    <alternativeName>
        <fullName evidence="1">Molybdenum cofactor biosynthesis protein A</fullName>
    </alternativeName>
</protein>
<keyword id="KW-0004">4Fe-4S</keyword>
<keyword id="KW-0342">GTP-binding</keyword>
<keyword id="KW-0408">Iron</keyword>
<keyword id="KW-0411">Iron-sulfur</keyword>
<keyword id="KW-0456">Lyase</keyword>
<keyword id="KW-0479">Metal-binding</keyword>
<keyword id="KW-0501">Molybdenum cofactor biosynthesis</keyword>
<keyword id="KW-0547">Nucleotide-binding</keyword>
<keyword id="KW-1185">Reference proteome</keyword>
<keyword id="KW-0949">S-adenosyl-L-methionine</keyword>
<gene>
    <name evidence="1" type="primary">moaA</name>
    <name type="ordered locus">CBO1940</name>
    <name type="ordered locus">CLC_1885</name>
</gene>
<proteinExistence type="inferred from homology"/>
<feature type="chain" id="PRO_1000054186" description="GTP 3',8-cyclase">
    <location>
        <begin position="1"/>
        <end position="319"/>
    </location>
</feature>
<feature type="domain" description="Radical SAM core" evidence="2">
    <location>
        <begin position="4"/>
        <end position="227"/>
    </location>
</feature>
<feature type="binding site" evidence="1">
    <location>
        <position position="13"/>
    </location>
    <ligand>
        <name>GTP</name>
        <dbReference type="ChEBI" id="CHEBI:37565"/>
    </ligand>
</feature>
<feature type="binding site" evidence="1">
    <location>
        <position position="20"/>
    </location>
    <ligand>
        <name>[4Fe-4S] cluster</name>
        <dbReference type="ChEBI" id="CHEBI:49883"/>
        <label>1</label>
        <note>4Fe-4S-S-AdoMet</note>
    </ligand>
</feature>
<feature type="binding site" evidence="1">
    <location>
        <position position="24"/>
    </location>
    <ligand>
        <name>[4Fe-4S] cluster</name>
        <dbReference type="ChEBI" id="CHEBI:49883"/>
        <label>1</label>
        <note>4Fe-4S-S-AdoMet</note>
    </ligand>
</feature>
<feature type="binding site" evidence="1">
    <location>
        <position position="26"/>
    </location>
    <ligand>
        <name>S-adenosyl-L-methionine</name>
        <dbReference type="ChEBI" id="CHEBI:59789"/>
    </ligand>
</feature>
<feature type="binding site" evidence="1">
    <location>
        <position position="27"/>
    </location>
    <ligand>
        <name>[4Fe-4S] cluster</name>
        <dbReference type="ChEBI" id="CHEBI:49883"/>
        <label>1</label>
        <note>4Fe-4S-S-AdoMet</note>
    </ligand>
</feature>
<feature type="binding site" evidence="1">
    <location>
        <position position="63"/>
    </location>
    <ligand>
        <name>GTP</name>
        <dbReference type="ChEBI" id="CHEBI:37565"/>
    </ligand>
</feature>
<feature type="binding site" evidence="1">
    <location>
        <position position="67"/>
    </location>
    <ligand>
        <name>S-adenosyl-L-methionine</name>
        <dbReference type="ChEBI" id="CHEBI:59789"/>
    </ligand>
</feature>
<feature type="binding site" evidence="1">
    <location>
        <position position="94"/>
    </location>
    <ligand>
        <name>GTP</name>
        <dbReference type="ChEBI" id="CHEBI:37565"/>
    </ligand>
</feature>
<feature type="binding site" evidence="1">
    <location>
        <position position="118"/>
    </location>
    <ligand>
        <name>S-adenosyl-L-methionine</name>
        <dbReference type="ChEBI" id="CHEBI:59789"/>
    </ligand>
</feature>
<feature type="binding site" evidence="1">
    <location>
        <position position="155"/>
    </location>
    <ligand>
        <name>GTP</name>
        <dbReference type="ChEBI" id="CHEBI:37565"/>
    </ligand>
</feature>
<feature type="binding site" evidence="1">
    <location>
        <position position="189"/>
    </location>
    <ligand>
        <name>S-adenosyl-L-methionine</name>
        <dbReference type="ChEBI" id="CHEBI:59789"/>
    </ligand>
</feature>
<feature type="binding site" evidence="1">
    <location>
        <position position="249"/>
    </location>
    <ligand>
        <name>[4Fe-4S] cluster</name>
        <dbReference type="ChEBI" id="CHEBI:49883"/>
        <label>2</label>
        <note>4Fe-4S-substrate</note>
    </ligand>
</feature>
<feature type="binding site" evidence="1">
    <location>
        <position position="252"/>
    </location>
    <ligand>
        <name>[4Fe-4S] cluster</name>
        <dbReference type="ChEBI" id="CHEBI:49883"/>
        <label>2</label>
        <note>4Fe-4S-substrate</note>
    </ligand>
</feature>
<feature type="binding site" evidence="1">
    <location>
        <begin position="254"/>
        <end position="256"/>
    </location>
    <ligand>
        <name>GTP</name>
        <dbReference type="ChEBI" id="CHEBI:37565"/>
    </ligand>
</feature>
<feature type="binding site" evidence="1">
    <location>
        <position position="266"/>
    </location>
    <ligand>
        <name>[4Fe-4S] cluster</name>
        <dbReference type="ChEBI" id="CHEBI:49883"/>
        <label>2</label>
        <note>4Fe-4S-substrate</note>
    </ligand>
</feature>
<dbReference type="EC" id="4.1.99.22" evidence="1"/>
<dbReference type="EMBL" id="CP000727">
    <property type="protein sequence ID" value="ABS38496.1"/>
    <property type="molecule type" value="Genomic_DNA"/>
</dbReference>
<dbReference type="EMBL" id="AM412317">
    <property type="protein sequence ID" value="CAL83482.1"/>
    <property type="molecule type" value="Genomic_DNA"/>
</dbReference>
<dbReference type="RefSeq" id="WP_011986479.1">
    <property type="nucleotide sequence ID" value="NC_009698.1"/>
</dbReference>
<dbReference type="RefSeq" id="YP_001254443.1">
    <property type="nucleotide sequence ID" value="NC_009495.1"/>
</dbReference>
<dbReference type="RefSeq" id="YP_001387740.1">
    <property type="nucleotide sequence ID" value="NC_009698.1"/>
</dbReference>
<dbReference type="SMR" id="A5I365"/>
<dbReference type="GeneID" id="5186195"/>
<dbReference type="KEGG" id="cbh:CLC_1885"/>
<dbReference type="KEGG" id="cbo:CBO1940"/>
<dbReference type="PATRIC" id="fig|413999.7.peg.1912"/>
<dbReference type="HOGENOM" id="CLU_009273_0_1_9"/>
<dbReference type="UniPathway" id="UPA00344"/>
<dbReference type="PRO" id="PR:A5I365"/>
<dbReference type="Proteomes" id="UP000001986">
    <property type="component" value="Chromosome"/>
</dbReference>
<dbReference type="GO" id="GO:0051539">
    <property type="term" value="F:4 iron, 4 sulfur cluster binding"/>
    <property type="evidence" value="ECO:0007669"/>
    <property type="project" value="UniProtKB-UniRule"/>
</dbReference>
<dbReference type="GO" id="GO:0061799">
    <property type="term" value="F:cyclic pyranopterin monophosphate synthase activity"/>
    <property type="evidence" value="ECO:0000318"/>
    <property type="project" value="GO_Central"/>
</dbReference>
<dbReference type="GO" id="GO:0061798">
    <property type="term" value="F:GTP 3',8'-cyclase activity"/>
    <property type="evidence" value="ECO:0000318"/>
    <property type="project" value="GO_Central"/>
</dbReference>
<dbReference type="GO" id="GO:0005525">
    <property type="term" value="F:GTP binding"/>
    <property type="evidence" value="ECO:0007669"/>
    <property type="project" value="UniProtKB-UniRule"/>
</dbReference>
<dbReference type="GO" id="GO:0046872">
    <property type="term" value="F:metal ion binding"/>
    <property type="evidence" value="ECO:0007669"/>
    <property type="project" value="UniProtKB-KW"/>
</dbReference>
<dbReference type="GO" id="GO:1904047">
    <property type="term" value="F:S-adenosyl-L-methionine binding"/>
    <property type="evidence" value="ECO:0007669"/>
    <property type="project" value="UniProtKB-UniRule"/>
</dbReference>
<dbReference type="GO" id="GO:0006777">
    <property type="term" value="P:Mo-molybdopterin cofactor biosynthetic process"/>
    <property type="evidence" value="ECO:0000318"/>
    <property type="project" value="GO_Central"/>
</dbReference>
<dbReference type="CDD" id="cd01335">
    <property type="entry name" value="Radical_SAM"/>
    <property type="match status" value="1"/>
</dbReference>
<dbReference type="CDD" id="cd21117">
    <property type="entry name" value="Twitch_MoaA"/>
    <property type="match status" value="1"/>
</dbReference>
<dbReference type="Gene3D" id="3.20.20.70">
    <property type="entry name" value="Aldolase class I"/>
    <property type="match status" value="1"/>
</dbReference>
<dbReference type="HAMAP" id="MF_01225_B">
    <property type="entry name" value="MoaA_B"/>
    <property type="match status" value="1"/>
</dbReference>
<dbReference type="InterPro" id="IPR013785">
    <property type="entry name" value="Aldolase_TIM"/>
</dbReference>
<dbReference type="InterPro" id="IPR006638">
    <property type="entry name" value="Elp3/MiaA/NifB-like_rSAM"/>
</dbReference>
<dbReference type="InterPro" id="IPR013483">
    <property type="entry name" value="MoaA"/>
</dbReference>
<dbReference type="InterPro" id="IPR000385">
    <property type="entry name" value="MoaA_NifB_PqqE_Fe-S-bd_CS"/>
</dbReference>
<dbReference type="InterPro" id="IPR010505">
    <property type="entry name" value="MoaA_twitch"/>
</dbReference>
<dbReference type="InterPro" id="IPR050105">
    <property type="entry name" value="MoCo_biosynth_MoaA/MoaC"/>
</dbReference>
<dbReference type="InterPro" id="IPR007197">
    <property type="entry name" value="rSAM"/>
</dbReference>
<dbReference type="NCBIfam" id="TIGR02666">
    <property type="entry name" value="moaA"/>
    <property type="match status" value="1"/>
</dbReference>
<dbReference type="NCBIfam" id="NF001199">
    <property type="entry name" value="PRK00164.2-1"/>
    <property type="match status" value="1"/>
</dbReference>
<dbReference type="PANTHER" id="PTHR22960:SF0">
    <property type="entry name" value="MOLYBDENUM COFACTOR BIOSYNTHESIS PROTEIN 1"/>
    <property type="match status" value="1"/>
</dbReference>
<dbReference type="PANTHER" id="PTHR22960">
    <property type="entry name" value="MOLYBDOPTERIN COFACTOR SYNTHESIS PROTEIN A"/>
    <property type="match status" value="1"/>
</dbReference>
<dbReference type="Pfam" id="PF13353">
    <property type="entry name" value="Fer4_12"/>
    <property type="match status" value="1"/>
</dbReference>
<dbReference type="Pfam" id="PF06463">
    <property type="entry name" value="Mob_synth_C"/>
    <property type="match status" value="1"/>
</dbReference>
<dbReference type="Pfam" id="PF04055">
    <property type="entry name" value="Radical_SAM"/>
    <property type="match status" value="1"/>
</dbReference>
<dbReference type="SFLD" id="SFLDG01383">
    <property type="entry name" value="cyclic_pyranopterin_phosphate"/>
    <property type="match status" value="1"/>
</dbReference>
<dbReference type="SFLD" id="SFLDS00029">
    <property type="entry name" value="Radical_SAM"/>
    <property type="match status" value="1"/>
</dbReference>
<dbReference type="SMART" id="SM00729">
    <property type="entry name" value="Elp3"/>
    <property type="match status" value="1"/>
</dbReference>
<dbReference type="SUPFAM" id="SSF102114">
    <property type="entry name" value="Radical SAM enzymes"/>
    <property type="match status" value="1"/>
</dbReference>
<dbReference type="PROSITE" id="PS01305">
    <property type="entry name" value="MOAA_NIFB_PQQE"/>
    <property type="match status" value="1"/>
</dbReference>
<dbReference type="PROSITE" id="PS51918">
    <property type="entry name" value="RADICAL_SAM"/>
    <property type="match status" value="1"/>
</dbReference>